<keyword id="KW-1185">Reference proteome</keyword>
<keyword id="KW-0946">Virion</keyword>
<keyword id="KW-0920">Virion tegument</keyword>
<comment type="subcellular location">
    <subcellularLocation>
        <location evidence="1">Virion tegument</location>
    </subcellularLocation>
</comment>
<comment type="similarity">
    <text evidence="2">Belongs to the herpesviridae US22 family.</text>
</comment>
<comment type="sequence caution" evidence="2">
    <conflict type="erroneous initiation">
        <sequence resource="EMBL-CDS" id="DAA00128"/>
    </conflict>
</comment>
<proteinExistence type="inferred from homology"/>
<organismHost>
    <name type="scientific">Homo sapiens</name>
    <name type="common">Human</name>
    <dbReference type="NCBI Taxonomy" id="9606"/>
</organismHost>
<reference key="1">
    <citation type="journal article" date="1990" name="Curr. Top. Microbiol. Immunol.">
        <title>Analysis of the protein-coding content of the sequence of human cytomegalovirus strain AD169.</title>
        <authorList>
            <person name="Chee M.S."/>
            <person name="Bankier A.T."/>
            <person name="Beck S."/>
            <person name="Bohni R."/>
            <person name="Brown C.M."/>
            <person name="Cerny R."/>
            <person name="Horsnell T."/>
            <person name="Hutchison C.A. III"/>
            <person name="Kouzarides T."/>
            <person name="Martignetti J.A."/>
            <person name="Preddie E."/>
            <person name="Satchwell S.C."/>
            <person name="Tomlinson P."/>
            <person name="Weston K.M."/>
            <person name="Barrell B.G."/>
        </authorList>
    </citation>
    <scope>NUCLEOTIDE SEQUENCE [LARGE SCALE GENOMIC DNA]</scope>
</reference>
<reference key="2">
    <citation type="journal article" date="2003" name="J. Gen. Virol.">
        <title>The human cytomegalovirus genome revisited: comparison with the chimpanzee cytomegalovirus genome.</title>
        <authorList>
            <person name="Davison A.J."/>
            <person name="Dolan A."/>
            <person name="Akter P."/>
            <person name="Addison C."/>
            <person name="Dargan D.J."/>
            <person name="Alcendor D.J."/>
            <person name="McGeoch D.J."/>
            <person name="Hayward G.S."/>
        </authorList>
    </citation>
    <scope>GENOME REANNOTATION</scope>
</reference>
<reference key="3">
    <citation type="journal article" date="2003" name="J. Gen. Virol.">
        <authorList>
            <person name="Davison A.J."/>
            <person name="Dolan A."/>
            <person name="Akter P."/>
            <person name="Addison C."/>
            <person name="Dargan D.J."/>
            <person name="Alcendor D.J."/>
            <person name="McGeoch D.J."/>
            <person name="Hayward G.S."/>
        </authorList>
    </citation>
    <scope>ERRATUM OF PUBMED:12533697</scope>
</reference>
<reference key="4">
    <citation type="journal article" date="2004" name="J. Virol.">
        <title>Identification of proteins in human cytomegalovirus (HCMV) particles: the HCMV proteome.</title>
        <authorList>
            <person name="Varnum S.M."/>
            <person name="Streblow D.N."/>
            <person name="Monroe M.E."/>
            <person name="Smith P."/>
            <person name="Auberry K.J."/>
            <person name="Pasa-Tolic L."/>
            <person name="Wang D."/>
            <person name="Camp D.G. II"/>
            <person name="Rodland K."/>
            <person name="Wiley S."/>
            <person name="Britt W."/>
            <person name="Shenk T."/>
            <person name="Smith R.D."/>
            <person name="Nelson J.A."/>
        </authorList>
    </citation>
    <scope>IDENTIFICATION</scope>
</reference>
<reference key="5">
    <citation type="journal article" date="2004" name="J. Virol.">
        <authorList>
            <person name="Varnum S.M."/>
            <person name="Streblow D.N."/>
            <person name="Monroe M.E."/>
            <person name="Smith P."/>
            <person name="Auberry K.J."/>
            <person name="Pasa-Tolic L."/>
            <person name="Wang D."/>
            <person name="Camp D.G. II"/>
            <person name="Rodland K."/>
            <person name="Wiley S."/>
            <person name="Britt W."/>
            <person name="Shenk T."/>
            <person name="Smith R.D."/>
            <person name="Nelson J.A."/>
        </authorList>
    </citation>
    <scope>ERRATUM OF PUBMED:15452216</scope>
</reference>
<reference key="6">
    <citation type="journal article" date="2002" name="J. Gen. Virol.">
        <title>The products of human cytomegalovirus genes UL23, UL24, UL43 and US22 are tegument components.</title>
        <authorList>
            <person name="Adair R."/>
            <person name="Douglas E.R."/>
            <person name="Maclean J.B."/>
            <person name="Graham S.Y."/>
            <person name="Aitken J.D."/>
            <person name="Jamieson F.E."/>
            <person name="Dargan D.J."/>
        </authorList>
    </citation>
    <scope>SUBCELLULAR LOCATION</scope>
</reference>
<protein>
    <recommendedName>
        <fullName>Protein UL24</fullName>
    </recommendedName>
</protein>
<feature type="chain" id="PRO_0000116307" description="Protein UL24">
    <location>
        <begin position="1"/>
        <end position="358"/>
    </location>
</feature>
<sequence>MEETRAGRYIVRAGSGGQTEDTASGAESVLATLAAVRTRRRSVVCDGPPGSPTDSARHMSDLASLALTAEFGLGCLEAYVRINAGQVLPVVWPPGWNLVLQEIETDEDFKPEDVKAWSHYLCCQTRLAFVGRFVNEGVLSPDQQKKTAVCLISDEGYVFCYVREDTAVYYLARNLMEFARVGLRAVETLHCMRYLTSSLVKRYFRPLLRAWSLGLDTMARFIIRHHGQFMPLTYPPGTELRLCNLRCFENSVEGGHLLRNIKTAFGMRVLGLGTVSLKGENAPFPHLRWPVDLIPIVVAYTGAVYACDVRDDRYIRVGDNLNTFMCLGLNLLFENRRFSGHNGIYDRVPDCPKGRQHR</sequence>
<accession>P16760</accession>
<accession>Q7M6Q9</accession>
<dbReference type="EMBL" id="X17403">
    <property type="protein sequence ID" value="CAA35423.1"/>
    <property type="molecule type" value="Genomic_DNA"/>
</dbReference>
<dbReference type="EMBL" id="BK000394">
    <property type="protein sequence ID" value="DAA00128.1"/>
    <property type="status" value="ALT_INIT"/>
    <property type="molecule type" value="Genomic_DNA"/>
</dbReference>
<dbReference type="PIR" id="S09787">
    <property type="entry name" value="QQBET1"/>
</dbReference>
<dbReference type="RefSeq" id="YP_081483.2">
    <property type="nucleotide sequence ID" value="NC_006273.2"/>
</dbReference>
<dbReference type="DNASU" id="3077489"/>
<dbReference type="GeneID" id="3077489"/>
<dbReference type="KEGG" id="vg:3077489"/>
<dbReference type="Proteomes" id="UP000008991">
    <property type="component" value="Segment"/>
</dbReference>
<dbReference type="Proteomes" id="UP000008992">
    <property type="component" value="Segment"/>
</dbReference>
<dbReference type="GO" id="GO:0019033">
    <property type="term" value="C:viral tegument"/>
    <property type="evidence" value="ECO:0007669"/>
    <property type="project" value="UniProtKB-SubCell"/>
</dbReference>
<dbReference type="InterPro" id="IPR003360">
    <property type="entry name" value="US22-like"/>
</dbReference>
<dbReference type="Pfam" id="PF02393">
    <property type="entry name" value="US22"/>
    <property type="match status" value="2"/>
</dbReference>
<organism>
    <name type="scientific">Human cytomegalovirus (strain AD169)</name>
    <name type="common">HHV-5</name>
    <name type="synonym">Human herpesvirus 5</name>
    <dbReference type="NCBI Taxonomy" id="10360"/>
    <lineage>
        <taxon>Viruses</taxon>
        <taxon>Duplodnaviria</taxon>
        <taxon>Heunggongvirae</taxon>
        <taxon>Peploviricota</taxon>
        <taxon>Herviviricetes</taxon>
        <taxon>Herpesvirales</taxon>
        <taxon>Orthoherpesviridae</taxon>
        <taxon>Betaherpesvirinae</taxon>
        <taxon>Cytomegalovirus</taxon>
        <taxon>Cytomegalovirus humanbeta5</taxon>
        <taxon>Human cytomegalovirus</taxon>
    </lineage>
</organism>
<name>VP22_HCMVA</name>
<gene>
    <name type="primary">UL24</name>
</gene>
<evidence type="ECO:0000269" key="1">
    <source>
    </source>
</evidence>
<evidence type="ECO:0000305" key="2"/>